<protein>
    <recommendedName>
        <fullName evidence="1">Recombination-associated protein RdgC</fullName>
    </recommendedName>
</protein>
<proteinExistence type="inferred from homology"/>
<accession>B0TPG2</accession>
<gene>
    <name evidence="1" type="primary">rdgC</name>
    <name type="ordered locus">Shal_3061</name>
</gene>
<organism>
    <name type="scientific">Shewanella halifaxensis (strain HAW-EB4)</name>
    <dbReference type="NCBI Taxonomy" id="458817"/>
    <lineage>
        <taxon>Bacteria</taxon>
        <taxon>Pseudomonadati</taxon>
        <taxon>Pseudomonadota</taxon>
        <taxon>Gammaproteobacteria</taxon>
        <taxon>Alteromonadales</taxon>
        <taxon>Shewanellaceae</taxon>
        <taxon>Shewanella</taxon>
    </lineage>
</organism>
<evidence type="ECO:0000255" key="1">
    <source>
        <dbReference type="HAMAP-Rule" id="MF_00194"/>
    </source>
</evidence>
<keyword id="KW-0963">Cytoplasm</keyword>
<keyword id="KW-0233">DNA recombination</keyword>
<sequence>MWFKNLTVYRFNKPFSVDPDSLEKSLEDFTFSPCSSQDISKFGFSKAMGKHGETLIHTAGDRHLICATKEEKILPSQVIKEALEEKVGHLEAEENRKLTKKEKDALKDEITTTLLPRAFSRRSQIRALILPEIQMILVDSSSAAKSEELMALLRKAIGTLPIIPISFKTPIETQLTEWLKEGKTPPAFEMQDEAELKSDSDEGGIVRFKQQDLSENEVLAHIEVGKQVHKLALHFGQSIAFVLQSDAAIKRLKFSEEFRADNDDLGNDDPMARLDADFALMSSELIALINAVVDALGGLEDSI</sequence>
<comment type="function">
    <text evidence="1">May be involved in recombination.</text>
</comment>
<comment type="subcellular location">
    <subcellularLocation>
        <location evidence="1">Cytoplasm</location>
        <location evidence="1">Nucleoid</location>
    </subcellularLocation>
</comment>
<comment type="similarity">
    <text evidence="1">Belongs to the RdgC family.</text>
</comment>
<name>RDGC_SHEHH</name>
<reference key="1">
    <citation type="submission" date="2008-01" db="EMBL/GenBank/DDBJ databases">
        <title>Complete sequence of Shewanella halifaxensis HAW-EB4.</title>
        <authorList>
            <consortium name="US DOE Joint Genome Institute"/>
            <person name="Copeland A."/>
            <person name="Lucas S."/>
            <person name="Lapidus A."/>
            <person name="Glavina del Rio T."/>
            <person name="Dalin E."/>
            <person name="Tice H."/>
            <person name="Bruce D."/>
            <person name="Goodwin L."/>
            <person name="Pitluck S."/>
            <person name="Sims D."/>
            <person name="Brettin T."/>
            <person name="Detter J.C."/>
            <person name="Han C."/>
            <person name="Kuske C.R."/>
            <person name="Schmutz J."/>
            <person name="Larimer F."/>
            <person name="Land M."/>
            <person name="Hauser L."/>
            <person name="Kyrpides N."/>
            <person name="Kim E."/>
            <person name="Zhao J.-S."/>
            <person name="Richardson P."/>
        </authorList>
    </citation>
    <scope>NUCLEOTIDE SEQUENCE [LARGE SCALE GENOMIC DNA]</scope>
    <source>
        <strain>HAW-EB4</strain>
    </source>
</reference>
<dbReference type="EMBL" id="CP000931">
    <property type="protein sequence ID" value="ABZ77609.1"/>
    <property type="molecule type" value="Genomic_DNA"/>
</dbReference>
<dbReference type="RefSeq" id="WP_012278135.1">
    <property type="nucleotide sequence ID" value="NC_010334.1"/>
</dbReference>
<dbReference type="SMR" id="B0TPG2"/>
<dbReference type="STRING" id="458817.Shal_3061"/>
<dbReference type="KEGG" id="shl:Shal_3061"/>
<dbReference type="eggNOG" id="COG2974">
    <property type="taxonomic scope" value="Bacteria"/>
</dbReference>
<dbReference type="HOGENOM" id="CLU_052038_1_1_6"/>
<dbReference type="OrthoDB" id="5290530at2"/>
<dbReference type="Proteomes" id="UP000001317">
    <property type="component" value="Chromosome"/>
</dbReference>
<dbReference type="GO" id="GO:0043590">
    <property type="term" value="C:bacterial nucleoid"/>
    <property type="evidence" value="ECO:0007669"/>
    <property type="project" value="TreeGrafter"/>
</dbReference>
<dbReference type="GO" id="GO:0005737">
    <property type="term" value="C:cytoplasm"/>
    <property type="evidence" value="ECO:0007669"/>
    <property type="project" value="UniProtKB-UniRule"/>
</dbReference>
<dbReference type="GO" id="GO:0003690">
    <property type="term" value="F:double-stranded DNA binding"/>
    <property type="evidence" value="ECO:0007669"/>
    <property type="project" value="TreeGrafter"/>
</dbReference>
<dbReference type="GO" id="GO:0006310">
    <property type="term" value="P:DNA recombination"/>
    <property type="evidence" value="ECO:0007669"/>
    <property type="project" value="UniProtKB-UniRule"/>
</dbReference>
<dbReference type="GO" id="GO:0000018">
    <property type="term" value="P:regulation of DNA recombination"/>
    <property type="evidence" value="ECO:0007669"/>
    <property type="project" value="TreeGrafter"/>
</dbReference>
<dbReference type="HAMAP" id="MF_00194">
    <property type="entry name" value="RdgC"/>
    <property type="match status" value="1"/>
</dbReference>
<dbReference type="InterPro" id="IPR007476">
    <property type="entry name" value="RdgC"/>
</dbReference>
<dbReference type="NCBIfam" id="NF001462">
    <property type="entry name" value="PRK00321.1-3"/>
    <property type="match status" value="1"/>
</dbReference>
<dbReference type="NCBIfam" id="NF001464">
    <property type="entry name" value="PRK00321.1-5"/>
    <property type="match status" value="1"/>
</dbReference>
<dbReference type="PANTHER" id="PTHR38103">
    <property type="entry name" value="RECOMBINATION-ASSOCIATED PROTEIN RDGC"/>
    <property type="match status" value="1"/>
</dbReference>
<dbReference type="PANTHER" id="PTHR38103:SF1">
    <property type="entry name" value="RECOMBINATION-ASSOCIATED PROTEIN RDGC"/>
    <property type="match status" value="1"/>
</dbReference>
<dbReference type="Pfam" id="PF04381">
    <property type="entry name" value="RdgC"/>
    <property type="match status" value="1"/>
</dbReference>
<feature type="chain" id="PRO_1000077643" description="Recombination-associated protein RdgC">
    <location>
        <begin position="1"/>
        <end position="303"/>
    </location>
</feature>